<evidence type="ECO:0000250" key="1"/>
<evidence type="ECO:0000255" key="2">
    <source>
        <dbReference type="HAMAP-Rule" id="MF_01109"/>
    </source>
</evidence>
<evidence type="ECO:0000305" key="3"/>
<proteinExistence type="inferred from homology"/>
<protein>
    <recommendedName>
        <fullName>Ornithine carbamoyltransferase</fullName>
        <shortName>OTCase</shortName>
        <ecNumber>2.1.3.3</ecNumber>
    </recommendedName>
</protein>
<keyword id="KW-0028">Amino-acid biosynthesis</keyword>
<keyword id="KW-0055">Arginine biosynthesis</keyword>
<keyword id="KW-0963">Cytoplasm</keyword>
<keyword id="KW-0808">Transferase</keyword>
<dbReference type="EC" id="2.1.3.3"/>
<dbReference type="EMBL" id="AEQZ01000044">
    <property type="protein sequence ID" value="EFV62801.1"/>
    <property type="molecule type" value="Genomic_DNA"/>
</dbReference>
<dbReference type="EMBL" id="CP002420">
    <property type="protein sequence ID" value="ADY95283.1"/>
    <property type="molecule type" value="Genomic_DNA"/>
</dbReference>
<dbReference type="EMBL" id="X64867">
    <property type="protein sequence ID" value="CAA46079.1"/>
    <property type="molecule type" value="Genomic_DNA"/>
</dbReference>
<dbReference type="PIR" id="S24734">
    <property type="entry name" value="S24734"/>
</dbReference>
<dbReference type="RefSeq" id="WP_002212820.1">
    <property type="nucleotide sequence ID" value="NZ_AEQZ01000044.1"/>
</dbReference>
<dbReference type="SMR" id="E6N013"/>
<dbReference type="KEGG" id="nmh:NMBH4476_0658"/>
<dbReference type="PATRIC" id="fig|909420.3.peg.864"/>
<dbReference type="HOGENOM" id="CLU_043846_3_1_4"/>
<dbReference type="UniPathway" id="UPA00068">
    <property type="reaction ID" value="UER00112"/>
</dbReference>
<dbReference type="Proteomes" id="UP000032707">
    <property type="component" value="Unassembled WGS sequence"/>
</dbReference>
<dbReference type="GO" id="GO:0005737">
    <property type="term" value="C:cytoplasm"/>
    <property type="evidence" value="ECO:0007669"/>
    <property type="project" value="UniProtKB-SubCell"/>
</dbReference>
<dbReference type="GO" id="GO:0016597">
    <property type="term" value="F:amino acid binding"/>
    <property type="evidence" value="ECO:0007669"/>
    <property type="project" value="InterPro"/>
</dbReference>
<dbReference type="GO" id="GO:0004585">
    <property type="term" value="F:ornithine carbamoyltransferase activity"/>
    <property type="evidence" value="ECO:0007669"/>
    <property type="project" value="UniProtKB-UniRule"/>
</dbReference>
<dbReference type="GO" id="GO:0042450">
    <property type="term" value="P:arginine biosynthetic process via ornithine"/>
    <property type="evidence" value="ECO:0007669"/>
    <property type="project" value="TreeGrafter"/>
</dbReference>
<dbReference type="GO" id="GO:0019240">
    <property type="term" value="P:citrulline biosynthetic process"/>
    <property type="evidence" value="ECO:0007669"/>
    <property type="project" value="TreeGrafter"/>
</dbReference>
<dbReference type="GO" id="GO:0006526">
    <property type="term" value="P:L-arginine biosynthetic process"/>
    <property type="evidence" value="ECO:0007669"/>
    <property type="project" value="UniProtKB-UniPathway"/>
</dbReference>
<dbReference type="FunFam" id="3.40.50.1370:FF:000004">
    <property type="entry name" value="Ornithine carbamoyltransferase"/>
    <property type="match status" value="1"/>
</dbReference>
<dbReference type="Gene3D" id="3.40.50.1370">
    <property type="entry name" value="Aspartate/ornithine carbamoyltransferase"/>
    <property type="match status" value="2"/>
</dbReference>
<dbReference type="HAMAP" id="MF_01109">
    <property type="entry name" value="OTCase"/>
    <property type="match status" value="1"/>
</dbReference>
<dbReference type="InterPro" id="IPR006132">
    <property type="entry name" value="Asp/Orn_carbamoyltranf_P-bd"/>
</dbReference>
<dbReference type="InterPro" id="IPR006130">
    <property type="entry name" value="Asp/Orn_carbamoylTrfase"/>
</dbReference>
<dbReference type="InterPro" id="IPR036901">
    <property type="entry name" value="Asp/Orn_carbamoylTrfase_sf"/>
</dbReference>
<dbReference type="InterPro" id="IPR006131">
    <property type="entry name" value="Asp_carbamoyltransf_Asp/Orn-bd"/>
</dbReference>
<dbReference type="InterPro" id="IPR002292">
    <property type="entry name" value="Orn/put_carbamltrans"/>
</dbReference>
<dbReference type="InterPro" id="IPR024904">
    <property type="entry name" value="OTCase_ArgI"/>
</dbReference>
<dbReference type="NCBIfam" id="TIGR00658">
    <property type="entry name" value="orni_carb_tr"/>
    <property type="match status" value="1"/>
</dbReference>
<dbReference type="NCBIfam" id="NF002470">
    <property type="entry name" value="PRK01713.1"/>
    <property type="match status" value="1"/>
</dbReference>
<dbReference type="PANTHER" id="PTHR45753:SF2">
    <property type="entry name" value="ORNITHINE CARBAMOYLTRANSFERASE"/>
    <property type="match status" value="1"/>
</dbReference>
<dbReference type="PANTHER" id="PTHR45753">
    <property type="entry name" value="ORNITHINE CARBAMOYLTRANSFERASE, MITOCHONDRIAL"/>
    <property type="match status" value="1"/>
</dbReference>
<dbReference type="Pfam" id="PF00185">
    <property type="entry name" value="OTCace"/>
    <property type="match status" value="1"/>
</dbReference>
<dbReference type="Pfam" id="PF02729">
    <property type="entry name" value="OTCace_N"/>
    <property type="match status" value="1"/>
</dbReference>
<dbReference type="PRINTS" id="PR00100">
    <property type="entry name" value="AOTCASE"/>
</dbReference>
<dbReference type="PRINTS" id="PR00102">
    <property type="entry name" value="OTCASE"/>
</dbReference>
<dbReference type="SUPFAM" id="SSF53671">
    <property type="entry name" value="Aspartate/ornithine carbamoyltransferase"/>
    <property type="match status" value="1"/>
</dbReference>
<dbReference type="PROSITE" id="PS00097">
    <property type="entry name" value="CARBAMOYLTRANSFERASE"/>
    <property type="match status" value="1"/>
</dbReference>
<feature type="chain" id="PRO_0000411247" description="Ornithine carbamoyltransferase">
    <location>
        <begin position="1"/>
        <end position="331"/>
    </location>
</feature>
<feature type="binding site" evidence="2">
    <location>
        <begin position="55"/>
        <end position="58"/>
    </location>
    <ligand>
        <name>carbamoyl phosphate</name>
        <dbReference type="ChEBI" id="CHEBI:58228"/>
    </ligand>
</feature>
<feature type="binding site" evidence="2">
    <location>
        <position position="82"/>
    </location>
    <ligand>
        <name>carbamoyl phosphate</name>
        <dbReference type="ChEBI" id="CHEBI:58228"/>
    </ligand>
</feature>
<feature type="binding site" evidence="2">
    <location>
        <position position="106"/>
    </location>
    <ligand>
        <name>carbamoyl phosphate</name>
        <dbReference type="ChEBI" id="CHEBI:58228"/>
    </ligand>
</feature>
<feature type="binding site" evidence="2">
    <location>
        <begin position="133"/>
        <end position="136"/>
    </location>
    <ligand>
        <name>carbamoyl phosphate</name>
        <dbReference type="ChEBI" id="CHEBI:58228"/>
    </ligand>
</feature>
<feature type="binding site" evidence="2">
    <location>
        <position position="166"/>
    </location>
    <ligand>
        <name>L-ornithine</name>
        <dbReference type="ChEBI" id="CHEBI:46911"/>
    </ligand>
</feature>
<feature type="binding site" evidence="2">
    <location>
        <position position="230"/>
    </location>
    <ligand>
        <name>L-ornithine</name>
        <dbReference type="ChEBI" id="CHEBI:46911"/>
    </ligand>
</feature>
<feature type="binding site" evidence="2">
    <location>
        <begin position="234"/>
        <end position="235"/>
    </location>
    <ligand>
        <name>L-ornithine</name>
        <dbReference type="ChEBI" id="CHEBI:46911"/>
    </ligand>
</feature>
<feature type="binding site" evidence="2">
    <location>
        <begin position="272"/>
        <end position="273"/>
    </location>
    <ligand>
        <name>carbamoyl phosphate</name>
        <dbReference type="ChEBI" id="CHEBI:58228"/>
    </ligand>
</feature>
<feature type="binding site" evidence="2">
    <location>
        <position position="317"/>
    </location>
    <ligand>
        <name>carbamoyl phosphate</name>
        <dbReference type="ChEBI" id="CHEBI:58228"/>
    </ligand>
</feature>
<sequence>MNLKNRHFLKLLDFTPEEITAYLDLAAELKAAKKAGREIQRMKGKNIALIFEKTSTRTRCAFEVAARDQGAGVTYLEPSASQIGHKESIKDTARVLGRMYDAIEYRGFGQEVVEELAKYAGVPVFNGLTNEFHPTQMLADALTMREHSGKPLNQTAFAYVGDARYNMGNSLLILGAKLGMDVRIGAPQSLWPSEGIIAAAHAAAKETGAKITLTENAHEAVKNVDFIHTDVWVSMGEPKEVWQERIDLLKDYRVTPELMAASGNPQVKFMHCLPAFHNRETKVGEWIYETFGLNGVEVTEEIFESPASIVFDQAENRMHTIKAVMVAALGD</sequence>
<comment type="function">
    <text evidence="1">Reversibly catalyzes the transfer of the carbamoyl group from carbamoyl phosphate (CP) to the N(epsilon) atom of ornithine (ORN) to produce L-citrulline.</text>
</comment>
<comment type="catalytic activity">
    <reaction>
        <text>carbamoyl phosphate + L-ornithine = L-citrulline + phosphate + H(+)</text>
        <dbReference type="Rhea" id="RHEA:19513"/>
        <dbReference type="ChEBI" id="CHEBI:15378"/>
        <dbReference type="ChEBI" id="CHEBI:43474"/>
        <dbReference type="ChEBI" id="CHEBI:46911"/>
        <dbReference type="ChEBI" id="CHEBI:57743"/>
        <dbReference type="ChEBI" id="CHEBI:58228"/>
        <dbReference type="EC" id="2.1.3.3"/>
    </reaction>
</comment>
<comment type="pathway">
    <text>Amino-acid biosynthesis; L-arginine biosynthesis; L-arginine from L-ornithine and carbamoyl phosphate: step 1/3.</text>
</comment>
<comment type="subcellular location">
    <subcellularLocation>
        <location evidence="1">Cytoplasm</location>
    </subcellularLocation>
</comment>
<comment type="similarity">
    <text evidence="3">Belongs to the aspartate/ornithine carbamoyltransferase superfamily. OTCase family.</text>
</comment>
<gene>
    <name type="primary">argF</name>
    <name type="ordered locus">NMBH4476_0658</name>
    <name type="ORF">NMH_2186</name>
</gene>
<accession>E6N013</accession>
<accession>Q9JYI3</accession>
<accession>Q9R812</accession>
<accession>Q9S6H2</accession>
<name>OTC_NEIMH</name>
<reference key="1">
    <citation type="journal article" date="2011" name="J. Bacteriol.">
        <title>Genome sequence of Neisseria meningitidis serogroup B strain H44/76.</title>
        <authorList>
            <person name="Piet J.R."/>
            <person name="Huis In 't Veld R.A."/>
            <person name="van Schaik B.D."/>
            <person name="van Kampen A.H."/>
            <person name="Baas F."/>
            <person name="van de Beek D."/>
            <person name="Pannekoek Y."/>
            <person name="van der Ende A."/>
        </authorList>
    </citation>
    <scope>NUCLEOTIDE SEQUENCE [LARGE SCALE GENOMIC DNA]</scope>
    <source>
        <strain>H44/76</strain>
    </source>
</reference>
<reference key="2">
    <citation type="journal article" date="2011" name="Proc. Natl. Acad. Sci. U.S.A.">
        <title>Neisseria meningitidis is structured in clades associated with restriction modification systems that modulate homologous recombination.</title>
        <authorList>
            <person name="Budroni S."/>
            <person name="Siena E."/>
            <person name="Hotopp J.C."/>
            <person name="Seib K.L."/>
            <person name="Serruto D."/>
            <person name="Nofroni C."/>
            <person name="Comanducci M."/>
            <person name="Riley D.R."/>
            <person name="Daugherty S.C."/>
            <person name="Angiuoli S.V."/>
            <person name="Covacci A."/>
            <person name="Pizza M."/>
            <person name="Rappuoli R."/>
            <person name="Moxon E.R."/>
            <person name="Tettelin H."/>
            <person name="Medini D."/>
        </authorList>
    </citation>
    <scope>NUCLEOTIDE SEQUENCE [LARGE SCALE GENOMIC DNA]</scope>
    <source>
        <strain>H44/76</strain>
    </source>
</reference>
<reference key="3">
    <citation type="journal article" date="1992" name="Mol. Microbiol.">
        <title>Sequence diversity within the argF, fbp and recA genes of natural isolates of Neisseria meningitidis: interspecies recombination within the argF gene.</title>
        <authorList>
            <person name="Zhou J."/>
            <person name="Spratt B.G."/>
        </authorList>
    </citation>
    <scope>NUCLEOTIDE SEQUENCE [GENOMIC DNA] OF 53-314</scope>
    <source>
        <strain>H44/76</strain>
    </source>
</reference>
<organism>
    <name type="scientific">Neisseria meningitidis serogroup B / serotype 15 (strain H44/76)</name>
    <dbReference type="NCBI Taxonomy" id="909420"/>
    <lineage>
        <taxon>Bacteria</taxon>
        <taxon>Pseudomonadati</taxon>
        <taxon>Pseudomonadota</taxon>
        <taxon>Betaproteobacteria</taxon>
        <taxon>Neisseriales</taxon>
        <taxon>Neisseriaceae</taxon>
        <taxon>Neisseria</taxon>
    </lineage>
</organism>